<comment type="function">
    <text evidence="4">Nuclear genome-encoded factor required for normal assembly of chloroplast polysomes.</text>
</comment>
<comment type="catalytic activity">
    <reaction evidence="7">
        <text>tRNA(Cys) + L-cysteine + ATP = L-cysteinyl-tRNA(Cys) + AMP + diphosphate</text>
        <dbReference type="Rhea" id="RHEA:17773"/>
        <dbReference type="Rhea" id="RHEA-COMP:9661"/>
        <dbReference type="Rhea" id="RHEA-COMP:9679"/>
        <dbReference type="ChEBI" id="CHEBI:30616"/>
        <dbReference type="ChEBI" id="CHEBI:33019"/>
        <dbReference type="ChEBI" id="CHEBI:35235"/>
        <dbReference type="ChEBI" id="CHEBI:78442"/>
        <dbReference type="ChEBI" id="CHEBI:78517"/>
        <dbReference type="ChEBI" id="CHEBI:456215"/>
        <dbReference type="EC" id="6.1.1.16"/>
    </reaction>
</comment>
<comment type="cofactor">
    <cofactor evidence="2">
        <name>Zn(2+)</name>
        <dbReference type="ChEBI" id="CHEBI:29105"/>
    </cofactor>
    <text evidence="2">Binds 1 zinc ion per subunit.</text>
</comment>
<comment type="subcellular location">
    <subcellularLocation>
        <location evidence="8">Plastid</location>
        <location evidence="8">Chloroplast</location>
    </subcellularLocation>
    <subcellularLocation>
        <location evidence="3">Mitochondrion</location>
    </subcellularLocation>
    <text evidence="9">The cps1 mutant phenotype resembling other non-photosynthetic mutants, CPS1 may function solely in chloroplasts.</text>
</comment>
<comment type="disruption phenotype">
    <text evidence="4">Pale green leaf phenotype. Global defects in chloroplast translation.</text>
</comment>
<comment type="similarity">
    <text evidence="7">Belongs to the class-I aminoacyl-tRNA synthetase family.</text>
</comment>
<comment type="sequence caution" evidence="7">
    <conflict type="frameshift">
        <sequence resource="EMBL-CDS" id="ACN34579"/>
    </conflict>
</comment>
<comment type="sequence caution" evidence="7">
    <conflict type="erroneous gene model prediction">
        <sequence resource="EMBL-CDS" id="ONM11120"/>
    </conflict>
</comment>
<name>CPS1_MAIZE</name>
<keyword id="KW-0030">Aminoacyl-tRNA synthetase</keyword>
<keyword id="KW-0067">ATP-binding</keyword>
<keyword id="KW-0150">Chloroplast</keyword>
<keyword id="KW-0436">Ligase</keyword>
<keyword id="KW-0479">Metal-binding</keyword>
<keyword id="KW-0496">Mitochondrion</keyword>
<keyword id="KW-0547">Nucleotide-binding</keyword>
<keyword id="KW-0934">Plastid</keyword>
<keyword id="KW-0648">Protein biosynthesis</keyword>
<keyword id="KW-1185">Reference proteome</keyword>
<keyword id="KW-0809">Transit peptide</keyword>
<keyword id="KW-0862">Zinc</keyword>
<feature type="transit peptide" description="Chloroplast and mitochondrion" evidence="3">
    <location>
        <begin position="1"/>
        <end position="43"/>
    </location>
</feature>
<feature type="chain" id="PRO_0000441337" description="Cysteine--tRNA ligase CPS1, chloroplastic/mitochondrial">
    <location>
        <begin position="44"/>
        <end position="564"/>
    </location>
</feature>
<feature type="short sequence motif" description="'HIGH' region" evidence="7">
    <location>
        <begin position="95"/>
        <end position="105"/>
    </location>
</feature>
<feature type="short sequence motif" description="'KMSKS' region" evidence="7">
    <location>
        <begin position="330"/>
        <end position="334"/>
    </location>
</feature>
<feature type="binding site" evidence="2">
    <location>
        <position position="93"/>
    </location>
    <ligand>
        <name>Zn(2+)</name>
        <dbReference type="ChEBI" id="CHEBI:29105"/>
    </ligand>
</feature>
<feature type="binding site" evidence="2">
    <location>
        <position position="273"/>
    </location>
    <ligand>
        <name>Zn(2+)</name>
        <dbReference type="ChEBI" id="CHEBI:29105"/>
    </ligand>
</feature>
<feature type="binding site" evidence="2">
    <location>
        <position position="298"/>
    </location>
    <ligand>
        <name>Zn(2+)</name>
        <dbReference type="ChEBI" id="CHEBI:29105"/>
    </ligand>
</feature>
<feature type="binding site" evidence="2">
    <location>
        <position position="302"/>
    </location>
    <ligand>
        <name>Zn(2+)</name>
        <dbReference type="ChEBI" id="CHEBI:29105"/>
    </ligand>
</feature>
<feature type="binding site" evidence="1">
    <location>
        <position position="333"/>
    </location>
    <ligand>
        <name>ATP</name>
        <dbReference type="ChEBI" id="CHEBI:30616"/>
    </ligand>
</feature>
<dbReference type="EC" id="6.1.1.16" evidence="7"/>
<dbReference type="EMBL" id="CM007647">
    <property type="protein sequence ID" value="ONM11120.1"/>
    <property type="status" value="ALT_SEQ"/>
    <property type="molecule type" value="Genomic_DNA"/>
</dbReference>
<dbReference type="EMBL" id="CM007647">
    <property type="protein sequence ID" value="ONM11121.1"/>
    <property type="molecule type" value="Genomic_DNA"/>
</dbReference>
<dbReference type="EMBL" id="BT067682">
    <property type="protein sequence ID" value="ACN34579.1"/>
    <property type="status" value="ALT_FRAME"/>
    <property type="molecule type" value="mRNA"/>
</dbReference>
<dbReference type="RefSeq" id="XP_008665717.1">
    <property type="nucleotide sequence ID" value="XM_008667495.1"/>
</dbReference>
<dbReference type="SMR" id="A0A1D6LAG9"/>
<dbReference type="FunCoup" id="A0A1D6LAG9">
    <property type="interactions" value="2156"/>
</dbReference>
<dbReference type="IntAct" id="A0A1D6LAG9">
    <property type="interactions" value="2"/>
</dbReference>
<dbReference type="STRING" id="4577.A0A1D6LAG9"/>
<dbReference type="PaxDb" id="4577-GRMZM2G156565_P01"/>
<dbReference type="EnsemblPlants" id="Zm00001eb063470_T002">
    <property type="protein sequence ID" value="Zm00001eb063470_P002"/>
    <property type="gene ID" value="Zm00001eb063470"/>
</dbReference>
<dbReference type="Gramene" id="Zm00001eb063470_T002">
    <property type="protein sequence ID" value="Zm00001eb063470_P002"/>
    <property type="gene ID" value="Zm00001eb063470"/>
</dbReference>
<dbReference type="KEGG" id="zma:103644288"/>
<dbReference type="eggNOG" id="KOG2007">
    <property type="taxonomic scope" value="Eukaryota"/>
</dbReference>
<dbReference type="InParanoid" id="A0A1D6LAG9"/>
<dbReference type="OMA" id="HHENSRS"/>
<dbReference type="OrthoDB" id="438179at2759"/>
<dbReference type="Proteomes" id="UP000007305">
    <property type="component" value="Chromosome 1"/>
</dbReference>
<dbReference type="ExpressionAtlas" id="A0A1D6LAG9">
    <property type="expression patterns" value="baseline and differential"/>
</dbReference>
<dbReference type="GO" id="GO:0009507">
    <property type="term" value="C:chloroplast"/>
    <property type="evidence" value="ECO:0000314"/>
    <property type="project" value="UniProtKB"/>
</dbReference>
<dbReference type="GO" id="GO:0005737">
    <property type="term" value="C:cytoplasm"/>
    <property type="evidence" value="ECO:0000318"/>
    <property type="project" value="GO_Central"/>
</dbReference>
<dbReference type="GO" id="GO:0005739">
    <property type="term" value="C:mitochondrion"/>
    <property type="evidence" value="ECO:0007669"/>
    <property type="project" value="UniProtKB-SubCell"/>
</dbReference>
<dbReference type="GO" id="GO:0005524">
    <property type="term" value="F:ATP binding"/>
    <property type="evidence" value="ECO:0000318"/>
    <property type="project" value="GO_Central"/>
</dbReference>
<dbReference type="GO" id="GO:0004817">
    <property type="term" value="F:cysteine-tRNA ligase activity"/>
    <property type="evidence" value="ECO:0000318"/>
    <property type="project" value="GO_Central"/>
</dbReference>
<dbReference type="GO" id="GO:0046872">
    <property type="term" value="F:metal ion binding"/>
    <property type="evidence" value="ECO:0007669"/>
    <property type="project" value="UniProtKB-KW"/>
</dbReference>
<dbReference type="GO" id="GO:0006423">
    <property type="term" value="P:cysteinyl-tRNA aminoacylation"/>
    <property type="evidence" value="ECO:0000318"/>
    <property type="project" value="GO_Central"/>
</dbReference>
<dbReference type="GO" id="GO:0006417">
    <property type="term" value="P:regulation of translation"/>
    <property type="evidence" value="ECO:0000315"/>
    <property type="project" value="UniProtKB"/>
</dbReference>
<dbReference type="CDD" id="cd00672">
    <property type="entry name" value="CysRS_core"/>
    <property type="match status" value="1"/>
</dbReference>
<dbReference type="FunFam" id="3.40.50.620:FF:000009">
    <property type="entry name" value="Cysteine--tRNA ligase"/>
    <property type="match status" value="1"/>
</dbReference>
<dbReference type="FunFam" id="1.20.120.1910:FF:000003">
    <property type="entry name" value="Cysteine--tRNA ligase CPS1, chloroplastic/mitochondrial"/>
    <property type="match status" value="1"/>
</dbReference>
<dbReference type="Gene3D" id="1.20.120.1910">
    <property type="entry name" value="Cysteine-tRNA ligase, C-terminal anti-codon recognition domain"/>
    <property type="match status" value="1"/>
</dbReference>
<dbReference type="Gene3D" id="3.40.50.620">
    <property type="entry name" value="HUPs"/>
    <property type="match status" value="1"/>
</dbReference>
<dbReference type="HAMAP" id="MF_00041">
    <property type="entry name" value="Cys_tRNA_synth"/>
    <property type="match status" value="1"/>
</dbReference>
<dbReference type="InterPro" id="IPR015803">
    <property type="entry name" value="Cys-tRNA-ligase"/>
</dbReference>
<dbReference type="InterPro" id="IPR015273">
    <property type="entry name" value="Cys-tRNA-synt_Ia_DALR"/>
</dbReference>
<dbReference type="InterPro" id="IPR024909">
    <property type="entry name" value="Cys-tRNA/MSH_ligase"/>
</dbReference>
<dbReference type="InterPro" id="IPR056411">
    <property type="entry name" value="CysS_C"/>
</dbReference>
<dbReference type="InterPro" id="IPR014729">
    <property type="entry name" value="Rossmann-like_a/b/a_fold"/>
</dbReference>
<dbReference type="InterPro" id="IPR032678">
    <property type="entry name" value="tRNA-synt_1_cat_dom"/>
</dbReference>
<dbReference type="InterPro" id="IPR009080">
    <property type="entry name" value="tRNAsynth_Ia_anticodon-bd"/>
</dbReference>
<dbReference type="NCBIfam" id="TIGR00435">
    <property type="entry name" value="cysS"/>
    <property type="match status" value="1"/>
</dbReference>
<dbReference type="PANTHER" id="PTHR10890:SF25">
    <property type="entry name" value="CYSTEINE--TRNA LIGASE, CHLOROPLASTIC_MITOCHONDRIAL"/>
    <property type="match status" value="1"/>
</dbReference>
<dbReference type="PANTHER" id="PTHR10890">
    <property type="entry name" value="CYSTEINYL-TRNA SYNTHETASE"/>
    <property type="match status" value="1"/>
</dbReference>
<dbReference type="Pfam" id="PF23493">
    <property type="entry name" value="CysS_C"/>
    <property type="match status" value="1"/>
</dbReference>
<dbReference type="Pfam" id="PF01406">
    <property type="entry name" value="tRNA-synt_1e"/>
    <property type="match status" value="1"/>
</dbReference>
<dbReference type="PRINTS" id="PR00983">
    <property type="entry name" value="TRNASYNTHCYS"/>
</dbReference>
<dbReference type="SMART" id="SM00840">
    <property type="entry name" value="DALR_2"/>
    <property type="match status" value="1"/>
</dbReference>
<dbReference type="SUPFAM" id="SSF47323">
    <property type="entry name" value="Anticodon-binding domain of a subclass of class I aminoacyl-tRNA synthetases"/>
    <property type="match status" value="1"/>
</dbReference>
<dbReference type="SUPFAM" id="SSF52374">
    <property type="entry name" value="Nucleotidylyl transferase"/>
    <property type="match status" value="1"/>
</dbReference>
<accession>A0A1D6LAG9</accession>
<accession>C0PHB3</accession>
<gene>
    <name evidence="5" type="primary">CPS1</name>
    <name evidence="10" type="ORF">ZEAMMB73_Zm00001d034736</name>
</gene>
<sequence length="564" mass="64090">MAAAVVVRRAAGLIPLLSSRFGARMPLHRALSQIPPPRFCRLLSQQTKPFSASASNGAATDRTRELRLYNTKSRKKEQFRPRIPGREVGMYVCGVTPYDDSHIGHARAYVAFDVLYRYLRYLDYEVRYVRNFTDIDDKIIARANQLGEDPFSLSKRFSDDFLSDMANLQCLPPSVEPRVSDHVDEIINMIKQILDNRCAYVVGGDVYFSVDNFPEYGELSGRKLDDNRAGERVAVDERKRNPADFALWKAAKDGEPWWDSPWGPGRPGWHIECSAMSAHYLGHSFDIHGGGEDLIFPHHENEIAQSRAACCDSTINYWIHNGFVNVNSQKMSKSLGNFVTIRKVIEMYHPLALRMFLLGTHYRSPINYTIEQLNVASDRLYYTYQTLRDCEEICQHQQSNTGNPLPANTLNYIQKLHDEFETSMSDDLHTSVALAAMSEPLKVMNDLLHTRKGKKQDKRLESLSALEEKIRVVLSVLGLLPSSYHEALQQLRDKALRRASITEELVVQKIEERTAARKAKQYEKSDEIRKELAAVGIALMDGPDGTTWRPSLPLPEEEAVLAKT</sequence>
<organism>
    <name type="scientific">Zea mays</name>
    <name type="common">Maize</name>
    <dbReference type="NCBI Taxonomy" id="4577"/>
    <lineage>
        <taxon>Eukaryota</taxon>
        <taxon>Viridiplantae</taxon>
        <taxon>Streptophyta</taxon>
        <taxon>Embryophyta</taxon>
        <taxon>Tracheophyta</taxon>
        <taxon>Spermatophyta</taxon>
        <taxon>Magnoliopsida</taxon>
        <taxon>Liliopsida</taxon>
        <taxon>Poales</taxon>
        <taxon>Poaceae</taxon>
        <taxon>PACMAD clade</taxon>
        <taxon>Panicoideae</taxon>
        <taxon>Andropogonodae</taxon>
        <taxon>Andropogoneae</taxon>
        <taxon>Tripsacinae</taxon>
        <taxon>Zea</taxon>
    </lineage>
</organism>
<proteinExistence type="evidence at transcript level"/>
<evidence type="ECO:0000250" key="1"/>
<evidence type="ECO:0000250" key="2">
    <source>
        <dbReference type="UniProtKB" id="P21888"/>
    </source>
</evidence>
<evidence type="ECO:0000255" key="3"/>
<evidence type="ECO:0000269" key="4">
    <source>
    </source>
</evidence>
<evidence type="ECO:0000303" key="5">
    <source>
    </source>
</evidence>
<evidence type="ECO:0000303" key="6">
    <source>
    </source>
</evidence>
<evidence type="ECO:0000305" key="7"/>
<evidence type="ECO:0000305" key="8">
    <source>
    </source>
</evidence>
<evidence type="ECO:0000305" key="9">
    <source>
    </source>
</evidence>
<evidence type="ECO:0000312" key="10">
    <source>
        <dbReference type="EMBL" id="ONM11121.1"/>
    </source>
</evidence>
<reference key="1">
    <citation type="journal article" date="2009" name="Science">
        <title>The B73 maize genome: complexity, diversity, and dynamics.</title>
        <authorList>
            <person name="Schnable P.S."/>
            <person name="Ware D."/>
            <person name="Fulton R.S."/>
            <person name="Stein J.C."/>
            <person name="Wei F."/>
            <person name="Pasternak S."/>
            <person name="Liang C."/>
            <person name="Zhang J."/>
            <person name="Fulton L."/>
            <person name="Graves T.A."/>
            <person name="Minx P."/>
            <person name="Reily A.D."/>
            <person name="Courtney L."/>
            <person name="Kruchowski S.S."/>
            <person name="Tomlinson C."/>
            <person name="Strong C."/>
            <person name="Delehaunty K."/>
            <person name="Fronick C."/>
            <person name="Courtney B."/>
            <person name="Rock S.M."/>
            <person name="Belter E."/>
            <person name="Du F."/>
            <person name="Kim K."/>
            <person name="Abbott R.M."/>
            <person name="Cotton M."/>
            <person name="Levy A."/>
            <person name="Marchetto P."/>
            <person name="Ochoa K."/>
            <person name="Jackson S.M."/>
            <person name="Gillam B."/>
            <person name="Chen W."/>
            <person name="Yan L."/>
            <person name="Higginbotham J."/>
            <person name="Cardenas M."/>
            <person name="Waligorski J."/>
            <person name="Applebaum E."/>
            <person name="Phelps L."/>
            <person name="Falcone J."/>
            <person name="Kanchi K."/>
            <person name="Thane T."/>
            <person name="Scimone A."/>
            <person name="Thane N."/>
            <person name="Henke J."/>
            <person name="Wang T."/>
            <person name="Ruppert J."/>
            <person name="Shah N."/>
            <person name="Rotter K."/>
            <person name="Hodges J."/>
            <person name="Ingenthron E."/>
            <person name="Cordes M."/>
            <person name="Kohlberg S."/>
            <person name="Sgro J."/>
            <person name="Delgado B."/>
            <person name="Mead K."/>
            <person name="Chinwalla A."/>
            <person name="Leonard S."/>
            <person name="Crouse K."/>
            <person name="Collura K."/>
            <person name="Kudrna D."/>
            <person name="Currie J."/>
            <person name="He R."/>
            <person name="Angelova A."/>
            <person name="Rajasekar S."/>
            <person name="Mueller T."/>
            <person name="Lomeli R."/>
            <person name="Scara G."/>
            <person name="Ko A."/>
            <person name="Delaney K."/>
            <person name="Wissotski M."/>
            <person name="Lopez G."/>
            <person name="Campos D."/>
            <person name="Braidotti M."/>
            <person name="Ashley E."/>
            <person name="Golser W."/>
            <person name="Kim H."/>
            <person name="Lee S."/>
            <person name="Lin J."/>
            <person name="Dujmic Z."/>
            <person name="Kim W."/>
            <person name="Talag J."/>
            <person name="Zuccolo A."/>
            <person name="Fan C."/>
            <person name="Sebastian A."/>
            <person name="Kramer M."/>
            <person name="Spiegel L."/>
            <person name="Nascimento L."/>
            <person name="Zutavern T."/>
            <person name="Miller B."/>
            <person name="Ambroise C."/>
            <person name="Muller S."/>
            <person name="Spooner W."/>
            <person name="Narechania A."/>
            <person name="Ren L."/>
            <person name="Wei S."/>
            <person name="Kumari S."/>
            <person name="Faga B."/>
            <person name="Levy M.J."/>
            <person name="McMahan L."/>
            <person name="Van Buren P."/>
            <person name="Vaughn M.W."/>
            <person name="Ying K."/>
            <person name="Yeh C.-T."/>
            <person name="Emrich S.J."/>
            <person name="Jia Y."/>
            <person name="Kalyanaraman A."/>
            <person name="Hsia A.-P."/>
            <person name="Barbazuk W.B."/>
            <person name="Baucom R.S."/>
            <person name="Brutnell T.P."/>
            <person name="Carpita N.C."/>
            <person name="Chaparro C."/>
            <person name="Chia J.-M."/>
            <person name="Deragon J.-M."/>
            <person name="Estill J.C."/>
            <person name="Fu Y."/>
            <person name="Jeddeloh J.A."/>
            <person name="Han Y."/>
            <person name="Lee H."/>
            <person name="Li P."/>
            <person name="Lisch D.R."/>
            <person name="Liu S."/>
            <person name="Liu Z."/>
            <person name="Nagel D.H."/>
            <person name="McCann M.C."/>
            <person name="SanMiguel P."/>
            <person name="Myers A.M."/>
            <person name="Nettleton D."/>
            <person name="Nguyen J."/>
            <person name="Penning B.W."/>
            <person name="Ponnala L."/>
            <person name="Schneider K.L."/>
            <person name="Schwartz D.C."/>
            <person name="Sharma A."/>
            <person name="Soderlund C."/>
            <person name="Springer N.M."/>
            <person name="Sun Q."/>
            <person name="Wang H."/>
            <person name="Waterman M."/>
            <person name="Westerman R."/>
            <person name="Wolfgruber T.K."/>
            <person name="Yang L."/>
            <person name="Yu Y."/>
            <person name="Zhang L."/>
            <person name="Zhou S."/>
            <person name="Zhu Q."/>
            <person name="Bennetzen J.L."/>
            <person name="Dawe R.K."/>
            <person name="Jiang J."/>
            <person name="Jiang N."/>
            <person name="Presting G.G."/>
            <person name="Wessler S.R."/>
            <person name="Aluru S."/>
            <person name="Martienssen R.A."/>
            <person name="Clifton S.W."/>
            <person name="McCombie W.R."/>
            <person name="Wing R.A."/>
            <person name="Wilson R.K."/>
        </authorList>
    </citation>
    <scope>NUCLEOTIDE SEQUENCE [LARGE SCALE GENOMIC DNA]</scope>
    <source>
        <strain>cv. B73</strain>
    </source>
</reference>
<reference key="2">
    <citation type="journal article" date="2009" name="PLoS Genet.">
        <title>Sequencing, mapping, and analysis of 27,455 maize full-length cDNAs.</title>
        <authorList>
            <person name="Soderlund C."/>
            <person name="Descour A."/>
            <person name="Kudrna D."/>
            <person name="Bomhoff M."/>
            <person name="Boyd L."/>
            <person name="Currie J."/>
            <person name="Angelova A."/>
            <person name="Collura K."/>
            <person name="Wissotski M."/>
            <person name="Ashley E."/>
            <person name="Morrow D."/>
            <person name="Fernandes J."/>
            <person name="Walbot V."/>
            <person name="Yu Y."/>
        </authorList>
    </citation>
    <scope>NUCLEOTIDE SEQUENCE [LARGE SCALE MRNA]</scope>
    <source>
        <strain>cv. B73</strain>
    </source>
</reference>
<reference key="3">
    <citation type="journal article" date="1993" name="Plant Cell">
        <title>Nuclear mutants of maize with defects in chloroplast polysome assembly have altered chloroplast RNA metabolism.</title>
        <authorList>
            <person name="Barkan A."/>
        </authorList>
    </citation>
    <scope>FUNCTION</scope>
    <scope>SUBCELLULAR LOCATION</scope>
    <scope>DISRUPTION PHENOTYPE</scope>
</reference>
<reference key="4">
    <citation type="journal article" date="2015" name="Biochim. Biophys. Acta">
        <title>Large-scale genetic analysis of chloroplast biogenesis in maize.</title>
        <authorList>
            <person name="Belcher S."/>
            <person name="Williams-Carrier R."/>
            <person name="Stiffler N."/>
            <person name="Barkan A."/>
        </authorList>
    </citation>
    <scope>SUBCELLULAR LOCATION</scope>
</reference>
<protein>
    <recommendedName>
        <fullName evidence="7">Cysteine--tRNA ligase CPS1, chloroplastic/mitochondrial</fullName>
        <ecNumber evidence="7">6.1.1.16</ecNumber>
    </recommendedName>
    <alternativeName>
        <fullName evidence="6">Chloroplast synthesis protein 1</fullName>
    </alternativeName>
    <alternativeName>
        <fullName evidence="7">Cysteinyl-tRNA synthetase</fullName>
    </alternativeName>
</protein>